<proteinExistence type="inferred from homology"/>
<reference key="1">
    <citation type="journal article" date="2004" name="J. Bacteriol.">
        <title>The genome sequence of Mycoplasma hyopneumoniae strain 232, the agent of swine mycoplasmosis.</title>
        <authorList>
            <person name="Minion F.C."/>
            <person name="Lefkowitz E.J."/>
            <person name="Madsen M.L."/>
            <person name="Cleary B.J."/>
            <person name="Swartzell S.M."/>
            <person name="Mahairas G.G."/>
        </authorList>
    </citation>
    <scope>NUCLEOTIDE SEQUENCE [LARGE SCALE GENOMIC DNA]</scope>
    <source>
        <strain>232</strain>
    </source>
</reference>
<sequence>MNKKYAKKFKKKPCQFCEAKLFYIDYKDIEVLQRFINTFGKIQPSRITGNCAKHQRKLALAVKRARFVALLPFIGDRIRGNYDKTRV</sequence>
<gene>
    <name evidence="1" type="primary">rpsR</name>
    <name type="ordered locus">mhp305</name>
</gene>
<comment type="function">
    <text evidence="1">Binds as a heterodimer with protein bS6 to the central domain of the 16S rRNA, where it helps stabilize the platform of the 30S subunit.</text>
</comment>
<comment type="subunit">
    <text evidence="1">Part of the 30S ribosomal subunit. Forms a tight heterodimer with protein bS6.</text>
</comment>
<comment type="similarity">
    <text evidence="1">Belongs to the bacterial ribosomal protein bS18 family.</text>
</comment>
<evidence type="ECO:0000255" key="1">
    <source>
        <dbReference type="HAMAP-Rule" id="MF_00270"/>
    </source>
</evidence>
<evidence type="ECO:0000305" key="2"/>
<feature type="chain" id="PRO_0000111181" description="Small ribosomal subunit protein bS18">
    <location>
        <begin position="1"/>
        <end position="87"/>
    </location>
</feature>
<keyword id="KW-0687">Ribonucleoprotein</keyword>
<keyword id="KW-0689">Ribosomal protein</keyword>
<keyword id="KW-0694">RNA-binding</keyword>
<keyword id="KW-0699">rRNA-binding</keyword>
<accession>Q600Z8</accession>
<dbReference type="EMBL" id="AE017332">
    <property type="protein sequence ID" value="AAV27818.1"/>
    <property type="molecule type" value="Genomic_DNA"/>
</dbReference>
<dbReference type="RefSeq" id="WP_011206141.1">
    <property type="nucleotide sequence ID" value="NC_006360.1"/>
</dbReference>
<dbReference type="SMR" id="Q600Z8"/>
<dbReference type="GeneID" id="41334595"/>
<dbReference type="KEGG" id="mhy:mhp305"/>
<dbReference type="eggNOG" id="COG0238">
    <property type="taxonomic scope" value="Bacteria"/>
</dbReference>
<dbReference type="HOGENOM" id="CLU_148710_2_0_14"/>
<dbReference type="PhylomeDB" id="Q600Z8"/>
<dbReference type="Proteomes" id="UP000006822">
    <property type="component" value="Chromosome"/>
</dbReference>
<dbReference type="GO" id="GO:0022627">
    <property type="term" value="C:cytosolic small ribosomal subunit"/>
    <property type="evidence" value="ECO:0007669"/>
    <property type="project" value="TreeGrafter"/>
</dbReference>
<dbReference type="GO" id="GO:0070181">
    <property type="term" value="F:small ribosomal subunit rRNA binding"/>
    <property type="evidence" value="ECO:0007669"/>
    <property type="project" value="TreeGrafter"/>
</dbReference>
<dbReference type="GO" id="GO:0003735">
    <property type="term" value="F:structural constituent of ribosome"/>
    <property type="evidence" value="ECO:0007669"/>
    <property type="project" value="InterPro"/>
</dbReference>
<dbReference type="GO" id="GO:0006412">
    <property type="term" value="P:translation"/>
    <property type="evidence" value="ECO:0007669"/>
    <property type="project" value="UniProtKB-UniRule"/>
</dbReference>
<dbReference type="Gene3D" id="4.10.640.10">
    <property type="entry name" value="Ribosomal protein S18"/>
    <property type="match status" value="1"/>
</dbReference>
<dbReference type="HAMAP" id="MF_00270">
    <property type="entry name" value="Ribosomal_bS18"/>
    <property type="match status" value="1"/>
</dbReference>
<dbReference type="InterPro" id="IPR001648">
    <property type="entry name" value="Ribosomal_bS18"/>
</dbReference>
<dbReference type="InterPro" id="IPR036870">
    <property type="entry name" value="Ribosomal_bS18_sf"/>
</dbReference>
<dbReference type="NCBIfam" id="TIGR00165">
    <property type="entry name" value="S18"/>
    <property type="match status" value="1"/>
</dbReference>
<dbReference type="PANTHER" id="PTHR13479">
    <property type="entry name" value="30S RIBOSOMAL PROTEIN S18"/>
    <property type="match status" value="1"/>
</dbReference>
<dbReference type="PANTHER" id="PTHR13479:SF40">
    <property type="entry name" value="SMALL RIBOSOMAL SUBUNIT PROTEIN BS18M"/>
    <property type="match status" value="1"/>
</dbReference>
<dbReference type="Pfam" id="PF01084">
    <property type="entry name" value="Ribosomal_S18"/>
    <property type="match status" value="1"/>
</dbReference>
<dbReference type="PRINTS" id="PR00974">
    <property type="entry name" value="RIBOSOMALS18"/>
</dbReference>
<dbReference type="SUPFAM" id="SSF46911">
    <property type="entry name" value="Ribosomal protein S18"/>
    <property type="match status" value="1"/>
</dbReference>
<name>RS18_MESH2</name>
<organism>
    <name type="scientific">Mesomycoplasma hyopneumoniae (strain 232)</name>
    <name type="common">Mycoplasma hyopneumoniae</name>
    <dbReference type="NCBI Taxonomy" id="295358"/>
    <lineage>
        <taxon>Bacteria</taxon>
        <taxon>Bacillati</taxon>
        <taxon>Mycoplasmatota</taxon>
        <taxon>Mycoplasmoidales</taxon>
        <taxon>Metamycoplasmataceae</taxon>
        <taxon>Mesomycoplasma</taxon>
    </lineage>
</organism>
<protein>
    <recommendedName>
        <fullName evidence="1">Small ribosomal subunit protein bS18</fullName>
    </recommendedName>
    <alternativeName>
        <fullName evidence="2">30S ribosomal protein S18</fullName>
    </alternativeName>
</protein>